<evidence type="ECO:0000255" key="1">
    <source>
        <dbReference type="HAMAP-Rule" id="MF_00531"/>
    </source>
</evidence>
<evidence type="ECO:0000305" key="2"/>
<name>RS19_RICRO</name>
<proteinExistence type="inferred from homology"/>
<accession>B0BUQ6</accession>
<feature type="chain" id="PRO_1000081787" description="Small ribosomal subunit protein uS19">
    <location>
        <begin position="1"/>
        <end position="92"/>
    </location>
</feature>
<comment type="function">
    <text evidence="1">Protein S19 forms a complex with S13 that binds strongly to the 16S ribosomal RNA.</text>
</comment>
<comment type="similarity">
    <text evidence="1">Belongs to the universal ribosomal protein uS19 family.</text>
</comment>
<protein>
    <recommendedName>
        <fullName evidence="1">Small ribosomal subunit protein uS19</fullName>
    </recommendedName>
    <alternativeName>
        <fullName evidence="2">30S ribosomal protein S19</fullName>
    </alternativeName>
</protein>
<keyword id="KW-0687">Ribonucleoprotein</keyword>
<keyword id="KW-0689">Ribosomal protein</keyword>
<keyword id="KW-0694">RNA-binding</keyword>
<keyword id="KW-0699">rRNA-binding</keyword>
<gene>
    <name evidence="1" type="primary">rpsS</name>
    <name type="ordered locus">RrIowa_1193</name>
</gene>
<dbReference type="EMBL" id="CP000766">
    <property type="protein sequence ID" value="ABY72966.1"/>
    <property type="molecule type" value="Genomic_DNA"/>
</dbReference>
<dbReference type="RefSeq" id="WP_004997794.1">
    <property type="nucleotide sequence ID" value="NC_010263.3"/>
</dbReference>
<dbReference type="SMR" id="B0BUQ6"/>
<dbReference type="GeneID" id="95361482"/>
<dbReference type="KEGG" id="rrj:RrIowa_1193"/>
<dbReference type="eggNOG" id="COG0185">
    <property type="taxonomic scope" value="Bacteria"/>
</dbReference>
<dbReference type="HOGENOM" id="CLU_144911_0_1_5"/>
<dbReference type="Proteomes" id="UP000000796">
    <property type="component" value="Chromosome"/>
</dbReference>
<dbReference type="GO" id="GO:0005737">
    <property type="term" value="C:cytoplasm"/>
    <property type="evidence" value="ECO:0007669"/>
    <property type="project" value="UniProtKB-ARBA"/>
</dbReference>
<dbReference type="GO" id="GO:0015935">
    <property type="term" value="C:small ribosomal subunit"/>
    <property type="evidence" value="ECO:0007669"/>
    <property type="project" value="InterPro"/>
</dbReference>
<dbReference type="GO" id="GO:0019843">
    <property type="term" value="F:rRNA binding"/>
    <property type="evidence" value="ECO:0007669"/>
    <property type="project" value="UniProtKB-UniRule"/>
</dbReference>
<dbReference type="GO" id="GO:0003735">
    <property type="term" value="F:structural constituent of ribosome"/>
    <property type="evidence" value="ECO:0007669"/>
    <property type="project" value="InterPro"/>
</dbReference>
<dbReference type="GO" id="GO:0000028">
    <property type="term" value="P:ribosomal small subunit assembly"/>
    <property type="evidence" value="ECO:0007669"/>
    <property type="project" value="TreeGrafter"/>
</dbReference>
<dbReference type="GO" id="GO:0006412">
    <property type="term" value="P:translation"/>
    <property type="evidence" value="ECO:0007669"/>
    <property type="project" value="UniProtKB-UniRule"/>
</dbReference>
<dbReference type="FunFam" id="3.30.860.10:FF:000001">
    <property type="entry name" value="30S ribosomal protein S19"/>
    <property type="match status" value="1"/>
</dbReference>
<dbReference type="Gene3D" id="3.30.860.10">
    <property type="entry name" value="30s Ribosomal Protein S19, Chain A"/>
    <property type="match status" value="1"/>
</dbReference>
<dbReference type="HAMAP" id="MF_00531">
    <property type="entry name" value="Ribosomal_uS19"/>
    <property type="match status" value="1"/>
</dbReference>
<dbReference type="InterPro" id="IPR002222">
    <property type="entry name" value="Ribosomal_uS19"/>
</dbReference>
<dbReference type="InterPro" id="IPR005732">
    <property type="entry name" value="Ribosomal_uS19_bac-type"/>
</dbReference>
<dbReference type="InterPro" id="IPR020934">
    <property type="entry name" value="Ribosomal_uS19_CS"/>
</dbReference>
<dbReference type="InterPro" id="IPR023575">
    <property type="entry name" value="Ribosomal_uS19_SF"/>
</dbReference>
<dbReference type="NCBIfam" id="TIGR01050">
    <property type="entry name" value="rpsS_bact"/>
    <property type="match status" value="1"/>
</dbReference>
<dbReference type="PANTHER" id="PTHR11880">
    <property type="entry name" value="RIBOSOMAL PROTEIN S19P FAMILY MEMBER"/>
    <property type="match status" value="1"/>
</dbReference>
<dbReference type="PANTHER" id="PTHR11880:SF8">
    <property type="entry name" value="SMALL RIBOSOMAL SUBUNIT PROTEIN US19M"/>
    <property type="match status" value="1"/>
</dbReference>
<dbReference type="Pfam" id="PF00203">
    <property type="entry name" value="Ribosomal_S19"/>
    <property type="match status" value="1"/>
</dbReference>
<dbReference type="PIRSF" id="PIRSF002144">
    <property type="entry name" value="Ribosomal_S19"/>
    <property type="match status" value="1"/>
</dbReference>
<dbReference type="PRINTS" id="PR00975">
    <property type="entry name" value="RIBOSOMALS19"/>
</dbReference>
<dbReference type="SUPFAM" id="SSF54570">
    <property type="entry name" value="Ribosomal protein S19"/>
    <property type="match status" value="1"/>
</dbReference>
<dbReference type="PROSITE" id="PS00323">
    <property type="entry name" value="RIBOSOMAL_S19"/>
    <property type="match status" value="1"/>
</dbReference>
<sequence>MARSIWKGPFVDGYLIKKVQKLMESGKSEMIKTWSRRSTILPIFVGFTFSVHNGNKFIPVSVNEEMVGRKLGEFAPTRTFHGHGADKKIKRK</sequence>
<organism>
    <name type="scientific">Rickettsia rickettsii (strain Iowa)</name>
    <dbReference type="NCBI Taxonomy" id="452659"/>
    <lineage>
        <taxon>Bacteria</taxon>
        <taxon>Pseudomonadati</taxon>
        <taxon>Pseudomonadota</taxon>
        <taxon>Alphaproteobacteria</taxon>
        <taxon>Rickettsiales</taxon>
        <taxon>Rickettsiaceae</taxon>
        <taxon>Rickettsieae</taxon>
        <taxon>Rickettsia</taxon>
        <taxon>spotted fever group</taxon>
    </lineage>
</organism>
<reference key="1">
    <citation type="journal article" date="2008" name="Infect. Immun.">
        <title>Genomic comparison of virulent Rickettsia rickettsii Sheila Smith and avirulent Rickettsia rickettsii Iowa.</title>
        <authorList>
            <person name="Ellison D.W."/>
            <person name="Clark T.R."/>
            <person name="Sturdevant D.E."/>
            <person name="Virtaneva K."/>
            <person name="Porcella S.F."/>
            <person name="Hackstadt T."/>
        </authorList>
    </citation>
    <scope>NUCLEOTIDE SEQUENCE [LARGE SCALE GENOMIC DNA]</scope>
    <source>
        <strain>Iowa</strain>
    </source>
</reference>